<accession>Q3SA48</accession>
<accession>A4IGQ9</accession>
<keyword id="KW-0175">Coiled coil</keyword>
<keyword id="KW-0238">DNA-binding</keyword>
<keyword id="KW-0539">Nucleus</keyword>
<keyword id="KW-1185">Reference proteome</keyword>
<keyword id="KW-0804">Transcription</keyword>
<keyword id="KW-0805">Transcription regulation</keyword>
<evidence type="ECO:0000250" key="1">
    <source>
        <dbReference type="UniProtKB" id="Q13207"/>
    </source>
</evidence>
<evidence type="ECO:0000250" key="2">
    <source>
        <dbReference type="UniProtKB" id="Q60707"/>
    </source>
</evidence>
<evidence type="ECO:0000255" key="3"/>
<evidence type="ECO:0000255" key="4">
    <source>
        <dbReference type="PROSITE-ProRule" id="PRU00201"/>
    </source>
</evidence>
<evidence type="ECO:0000256" key="5">
    <source>
        <dbReference type="SAM" id="MobiDB-lite"/>
    </source>
</evidence>
<evidence type="ECO:0000269" key="6">
    <source>
    </source>
</evidence>
<sequence>MRDPAFPGAAMAYHPFHAPRPADFPMSAFLAAAQPSFFPALTLPPAALGKPLSDPSLAGAAEAGLHVSALGHHHQAAHLRSLKSLEPEEEVEDDPKVTLEAKELWDQFHKLGTEMVITKSGRRMFPPFKVRVSGLDKKAKYILLMDIVAADDCRYKFHNSRWMVAGKADPEMPKRMYIHPDSPATGEQWMAKPVAFHKLKLTNNISDKHGFTILNSMHKYQPRFHIVRANDILKLPYSTFRTYVFPETDFIAVTAYQNDKITQLKIDNNPFAKGFRDTGNGRREKRKQLSLPSLRMYEEQCKADRDGAESDASSCDPAPGRDSLHSPLSTEPSPLRLHRSNREEKFGADSDQELDRREVRTARSHSPVGHRSPPSSPRLEDRGKDKNTPEKKSESPESRKDGGDNVFSRSLEKDKGESRRKEDSKSDPECGSLSKETFAPLMVQTDSPPHLSASHLQSLALSGLHGQQFFNPLNAAQPLFIHPGQFTMGPGAFSAMGMGHLLASMTGASALDNGSLSSVQGATGAATFPFHLSQHMLASQGIPMPAFGGLFPYPYTYMAAAAAAASAMPATSAATTMPRNPFLSSTRPRLRFNPYQIPVGIPPSTNLLTTGLSASLNPGSESSKPGSSRESSPIPDTPGHKRSHSNSLSPKASMKDSINELQNIQRLVSGLESQREVSPGRETPK</sequence>
<reference key="1">
    <citation type="journal article" date="2006" name="Dev. Dyn.">
        <title>Developmental expression patterns of Tb x 1, Tb x 2, Tb x 5, and Tb x 20 in Xenopus tropicalis.</title>
        <authorList>
            <person name="Showell C."/>
            <person name="Christine K.S."/>
            <person name="Mandel E.M."/>
            <person name="Conlon F.L."/>
        </authorList>
    </citation>
    <scope>NUCLEOTIDE SEQUENCE [MRNA]</scope>
    <scope>DEVELOPMENTAL STAGE</scope>
</reference>
<reference key="2">
    <citation type="submission" date="2007-03" db="EMBL/GenBank/DDBJ databases">
        <authorList>
            <consortium name="NIH - Xenopus Gene Collection (XGC) project"/>
        </authorList>
    </citation>
    <scope>NUCLEOTIDE SEQUENCE [LARGE SCALE MRNA]</scope>
    <source>
        <tissue>Embryo</tissue>
    </source>
</reference>
<dbReference type="EMBL" id="DQ124206">
    <property type="protein sequence ID" value="AAZ79651.1"/>
    <property type="molecule type" value="mRNA"/>
</dbReference>
<dbReference type="EMBL" id="BC135209">
    <property type="protein sequence ID" value="AAI35210.1"/>
    <property type="molecule type" value="mRNA"/>
</dbReference>
<dbReference type="RefSeq" id="NP_001030291.1">
    <property type="nucleotide sequence ID" value="NM_001035119.1"/>
</dbReference>
<dbReference type="RefSeq" id="XP_017946799.1">
    <property type="nucleotide sequence ID" value="XM_018091310.1"/>
</dbReference>
<dbReference type="SMR" id="Q3SA48"/>
<dbReference type="FunCoup" id="Q3SA48">
    <property type="interactions" value="857"/>
</dbReference>
<dbReference type="STRING" id="8364.ENSXETP00000051858"/>
<dbReference type="PaxDb" id="8364-ENSXETP00000044410"/>
<dbReference type="DNASU" id="619588"/>
<dbReference type="GeneID" id="619588"/>
<dbReference type="KEGG" id="xtr:619588"/>
<dbReference type="AGR" id="Xenbase:XB-GENE-1018115"/>
<dbReference type="CTD" id="6909"/>
<dbReference type="Xenbase" id="XB-GENE-1018115">
    <property type="gene designation" value="tbx2"/>
</dbReference>
<dbReference type="eggNOG" id="KOG3585">
    <property type="taxonomic scope" value="Eukaryota"/>
</dbReference>
<dbReference type="HOGENOM" id="CLU_023038_1_0_1"/>
<dbReference type="InParanoid" id="Q3SA48"/>
<dbReference type="OMA" id="EQCKPER"/>
<dbReference type="OrthoDB" id="7442607at2759"/>
<dbReference type="PhylomeDB" id="Q3SA48"/>
<dbReference type="TreeFam" id="TF106341"/>
<dbReference type="Proteomes" id="UP000008143">
    <property type="component" value="Chromosome 2"/>
</dbReference>
<dbReference type="Bgee" id="ENSXETG00000020557">
    <property type="expression patterns" value="Expressed in hypaxial musculature and 24 other cell types or tissues"/>
</dbReference>
<dbReference type="GO" id="GO:0005634">
    <property type="term" value="C:nucleus"/>
    <property type="evidence" value="ECO:0007669"/>
    <property type="project" value="UniProtKB-SubCell"/>
</dbReference>
<dbReference type="GO" id="GO:0003700">
    <property type="term" value="F:DNA-binding transcription factor activity"/>
    <property type="evidence" value="ECO:0007669"/>
    <property type="project" value="InterPro"/>
</dbReference>
<dbReference type="GO" id="GO:0000978">
    <property type="term" value="F:RNA polymerase II cis-regulatory region sequence-specific DNA binding"/>
    <property type="evidence" value="ECO:0007669"/>
    <property type="project" value="InterPro"/>
</dbReference>
<dbReference type="GO" id="GO:0001702">
    <property type="term" value="P:gastrulation with mouth forming second"/>
    <property type="evidence" value="ECO:0000315"/>
    <property type="project" value="Xenbase"/>
</dbReference>
<dbReference type="GO" id="GO:0045893">
    <property type="term" value="P:positive regulation of DNA-templated transcription"/>
    <property type="evidence" value="ECO:0007669"/>
    <property type="project" value="InterPro"/>
</dbReference>
<dbReference type="CDD" id="cd20188">
    <property type="entry name" value="T-box_TBX2_3-like"/>
    <property type="match status" value="1"/>
</dbReference>
<dbReference type="FunFam" id="2.60.40.820:FF:000003">
    <property type="entry name" value="T-box transcription factor TBX3"/>
    <property type="match status" value="1"/>
</dbReference>
<dbReference type="Gene3D" id="2.60.40.820">
    <property type="entry name" value="Transcription factor, T-box"/>
    <property type="match status" value="1"/>
</dbReference>
<dbReference type="InterPro" id="IPR008967">
    <property type="entry name" value="p53-like_TF_DNA-bd_sf"/>
</dbReference>
<dbReference type="InterPro" id="IPR046360">
    <property type="entry name" value="T-box_DNA-bd"/>
</dbReference>
<dbReference type="InterPro" id="IPR036960">
    <property type="entry name" value="T-box_sf"/>
</dbReference>
<dbReference type="InterPro" id="IPR022582">
    <property type="entry name" value="TBX2/3_TAD"/>
</dbReference>
<dbReference type="InterPro" id="IPR048387">
    <property type="entry name" value="TBX2_3_RD"/>
</dbReference>
<dbReference type="InterPro" id="IPR002070">
    <property type="entry name" value="TF_Brachyury"/>
</dbReference>
<dbReference type="InterPro" id="IPR001699">
    <property type="entry name" value="TF_T-box"/>
</dbReference>
<dbReference type="InterPro" id="IPR018186">
    <property type="entry name" value="TF_T-box_CS"/>
</dbReference>
<dbReference type="PANTHER" id="PTHR11267">
    <property type="entry name" value="T-BOX PROTEIN-RELATED"/>
    <property type="match status" value="1"/>
</dbReference>
<dbReference type="PANTHER" id="PTHR11267:SF82">
    <property type="entry name" value="T-BOX TRANSCRIPTION FACTOR TBX2"/>
    <property type="match status" value="1"/>
</dbReference>
<dbReference type="Pfam" id="PF00907">
    <property type="entry name" value="T-box"/>
    <property type="match status" value="1"/>
</dbReference>
<dbReference type="Pfam" id="PF20627">
    <property type="entry name" value="TBX2-3_RD"/>
    <property type="match status" value="1"/>
</dbReference>
<dbReference type="Pfam" id="PF12598">
    <property type="entry name" value="TBX2-3_TAD"/>
    <property type="match status" value="1"/>
</dbReference>
<dbReference type="PRINTS" id="PR00938">
    <property type="entry name" value="BRACHYURY"/>
</dbReference>
<dbReference type="PRINTS" id="PR00937">
    <property type="entry name" value="TBOX"/>
</dbReference>
<dbReference type="SMART" id="SM00425">
    <property type="entry name" value="TBOX"/>
    <property type="match status" value="1"/>
</dbReference>
<dbReference type="SUPFAM" id="SSF49417">
    <property type="entry name" value="p53-like transcription factors"/>
    <property type="match status" value="1"/>
</dbReference>
<dbReference type="PROSITE" id="PS01283">
    <property type="entry name" value="TBOX_1"/>
    <property type="match status" value="1"/>
</dbReference>
<dbReference type="PROSITE" id="PS01264">
    <property type="entry name" value="TBOX_2"/>
    <property type="match status" value="1"/>
</dbReference>
<dbReference type="PROSITE" id="PS50252">
    <property type="entry name" value="TBOX_3"/>
    <property type="match status" value="1"/>
</dbReference>
<feature type="chain" id="PRO_0000262466" description="T-box transcription factor TBX2">
    <location>
        <begin position="1"/>
        <end position="685"/>
    </location>
</feature>
<feature type="DNA-binding region" description="T-box" evidence="4">
    <location>
        <begin position="104"/>
        <end position="277"/>
    </location>
</feature>
<feature type="region of interest" description="Disordered" evidence="5">
    <location>
        <begin position="270"/>
        <end position="433"/>
    </location>
</feature>
<feature type="region of interest" description="Disordered" evidence="5">
    <location>
        <begin position="606"/>
        <end position="660"/>
    </location>
</feature>
<feature type="coiled-coil region" evidence="3">
    <location>
        <begin position="652"/>
        <end position="676"/>
    </location>
</feature>
<feature type="compositionally biased region" description="Basic and acidic residues" evidence="5">
    <location>
        <begin position="296"/>
        <end position="308"/>
    </location>
</feature>
<feature type="compositionally biased region" description="Basic and acidic residues" evidence="5">
    <location>
        <begin position="340"/>
        <end position="361"/>
    </location>
</feature>
<feature type="compositionally biased region" description="Basic and acidic residues" evidence="5">
    <location>
        <begin position="378"/>
        <end position="403"/>
    </location>
</feature>
<feature type="compositionally biased region" description="Basic and acidic residues" evidence="5">
    <location>
        <begin position="410"/>
        <end position="428"/>
    </location>
</feature>
<feature type="compositionally biased region" description="Polar residues" evidence="5">
    <location>
        <begin position="606"/>
        <end position="617"/>
    </location>
</feature>
<feature type="compositionally biased region" description="Low complexity" evidence="5">
    <location>
        <begin position="618"/>
        <end position="633"/>
    </location>
</feature>
<organism>
    <name type="scientific">Xenopus tropicalis</name>
    <name type="common">Western clawed frog</name>
    <name type="synonym">Silurana tropicalis</name>
    <dbReference type="NCBI Taxonomy" id="8364"/>
    <lineage>
        <taxon>Eukaryota</taxon>
        <taxon>Metazoa</taxon>
        <taxon>Chordata</taxon>
        <taxon>Craniata</taxon>
        <taxon>Vertebrata</taxon>
        <taxon>Euteleostomi</taxon>
        <taxon>Amphibia</taxon>
        <taxon>Batrachia</taxon>
        <taxon>Anura</taxon>
        <taxon>Pipoidea</taxon>
        <taxon>Pipidae</taxon>
        <taxon>Xenopodinae</taxon>
        <taxon>Xenopus</taxon>
        <taxon>Silurana</taxon>
    </lineage>
</organism>
<protein>
    <recommendedName>
        <fullName>T-box transcription factor TBX2</fullName>
        <shortName>T-box protein 2</shortName>
    </recommendedName>
</protein>
<gene>
    <name type="primary">tbx2</name>
</gene>
<name>TBX2_XENTR</name>
<comment type="function">
    <text evidence="1 2">Transcription factor which acts as a transcriptional repressor (By similarity). May also function as a transcriptional activator (By similarity). Binds to the palindromic T site 5'-TTCACACCTAGGTGTGAA-3' DNA sequence, or a half-site, which are present in the regulatory region of several genes (By similarity).</text>
</comment>
<comment type="subunit">
    <text evidence="1">Binds DNA as a monomer.</text>
</comment>
<comment type="subcellular location">
    <subcellularLocation>
        <location evidence="1">Nucleus</location>
    </subcellularLocation>
</comment>
<comment type="developmental stage">
    <text evidence="6">Expressed ventrally in early gastrulae (stage 10.5) and is expressed most strongly in the outer layer of ectodermal cells. At the late gastrula stage (stage 12), expression appears to be up-regulated consistently in a small group of cells clustered around the ventral edge of the closing blastopore. At the early neurula stage (stage 13), four regions of ectodermal expression are clearly detected. At stage 19 (late neurula), expression persists in the cement gland, the ventral epidermis, the proctodeal region, the lens placodes, and in a broad placodal area caudal to the eye anlagen. In addition, expression also detected in the dorsal root ganglia of the future spinal cord. At stage 21/22, expression seen in a wishbone-shaped group of cells situated dorsal and caudal to each developing optic vesicle corresponding to the cranial (profundal and trigeminal) ganglia. Expression persists in these cells through tail bud and into early tadpole stages. From stage 21/22 onward, the bilateral expression in the ectodermal placodes becomes restricted primarily to the otic placode and the developing otic vesicles. At stage 24, also observed in the precursors of the hypaxial muscles and the pronephric duct in the trunk, in the developing branchial arches and in the primordium of the heart. In stage 29 embryos, expression detected in the frontonasal process and continues to be expressed in the same regions of the embryo at stage 33, although its expression becomes clearly regionalized in the looping heart. A higher level of expression seen in the ventricle as compared with the atrium.</text>
</comment>
<proteinExistence type="evidence at transcript level"/>